<gene>
    <name type="primary">MUC17</name>
    <name type="synonym">MUC3</name>
</gene>
<proteinExistence type="evidence at protein level"/>
<feature type="signal peptide" evidence="1">
    <location>
        <begin position="1"/>
        <end position="25"/>
    </location>
</feature>
<feature type="chain" id="PRO_0000326254" description="Mucin-17">
    <location>
        <begin position="26"/>
        <end position="4493"/>
    </location>
</feature>
<feature type="topological domain" description="Extracellular" evidence="1">
    <location>
        <begin position="26"/>
        <end position="4393"/>
    </location>
</feature>
<feature type="transmembrane region" description="Helical" evidence="1">
    <location>
        <begin position="4394"/>
        <end position="4414"/>
    </location>
</feature>
<feature type="topological domain" description="Cytoplasmic" evidence="1">
    <location>
        <begin position="4415"/>
        <end position="4493"/>
    </location>
</feature>
<feature type="repeat" description="1">
    <location>
        <begin position="185"/>
        <end position="245"/>
    </location>
</feature>
<feature type="repeat" description="2">
    <location>
        <begin position="246"/>
        <end position="300"/>
    </location>
</feature>
<feature type="repeat" description="3">
    <location>
        <begin position="301"/>
        <end position="361"/>
    </location>
</feature>
<feature type="repeat" description="4">
    <location>
        <begin position="362"/>
        <end position="418"/>
    </location>
</feature>
<feature type="repeat" description="5">
    <location>
        <begin position="420"/>
        <end position="477"/>
    </location>
</feature>
<feature type="repeat" description="6">
    <location>
        <begin position="479"/>
        <end position="538"/>
    </location>
</feature>
<feature type="repeat" description="7">
    <location>
        <begin position="539"/>
        <end position="597"/>
    </location>
</feature>
<feature type="repeat" description="8">
    <location>
        <begin position="598"/>
        <end position="654"/>
    </location>
</feature>
<feature type="repeat" description="9">
    <location>
        <begin position="656"/>
        <end position="715"/>
    </location>
</feature>
<feature type="repeat" description="10">
    <location>
        <begin position="716"/>
        <end position="774"/>
    </location>
</feature>
<feature type="repeat" description="11">
    <location>
        <begin position="775"/>
        <end position="831"/>
    </location>
</feature>
<feature type="repeat" description="12">
    <location>
        <begin position="833"/>
        <end position="892"/>
    </location>
</feature>
<feature type="repeat" description="13">
    <location>
        <begin position="893"/>
        <end position="951"/>
    </location>
</feature>
<feature type="repeat" description="14">
    <location>
        <begin position="952"/>
        <end position="1010"/>
    </location>
</feature>
<feature type="repeat" description="15">
    <location>
        <begin position="1011"/>
        <end position="1069"/>
    </location>
</feature>
<feature type="repeat" description="16">
    <location>
        <begin position="1070"/>
        <end position="1121"/>
    </location>
</feature>
<feature type="repeat" description="17">
    <location>
        <begin position="1122"/>
        <end position="1187"/>
    </location>
</feature>
<feature type="repeat" description="18">
    <location>
        <begin position="1188"/>
        <end position="1246"/>
    </location>
</feature>
<feature type="repeat" description="19">
    <location>
        <begin position="1247"/>
        <end position="1305"/>
    </location>
</feature>
<feature type="repeat" description="20">
    <location>
        <begin position="1306"/>
        <end position="1364"/>
    </location>
</feature>
<feature type="repeat" description="21">
    <location>
        <begin position="1365"/>
        <end position="1423"/>
    </location>
</feature>
<feature type="repeat" description="22">
    <location>
        <begin position="1424"/>
        <end position="1482"/>
    </location>
</feature>
<feature type="repeat" description="23">
    <location>
        <begin position="1483"/>
        <end position="1541"/>
    </location>
</feature>
<feature type="repeat" description="24">
    <location>
        <begin position="1542"/>
        <end position="1600"/>
    </location>
</feature>
<feature type="repeat" description="25">
    <location>
        <begin position="1601"/>
        <end position="1656"/>
    </location>
</feature>
<feature type="repeat" description="26">
    <location>
        <begin position="1658"/>
        <end position="1717"/>
    </location>
</feature>
<feature type="repeat" description="27">
    <location>
        <begin position="1718"/>
        <end position="1776"/>
    </location>
</feature>
<feature type="repeat" description="28">
    <location>
        <begin position="1777"/>
        <end position="1835"/>
    </location>
</feature>
<feature type="repeat" description="29">
    <location>
        <begin position="1836"/>
        <end position="1895"/>
    </location>
</feature>
<feature type="repeat" description="30">
    <location>
        <begin position="1896"/>
        <end position="1951"/>
    </location>
</feature>
<feature type="repeat" description="31">
    <location>
        <begin position="1953"/>
        <end position="2012"/>
    </location>
</feature>
<feature type="repeat" description="32">
    <location>
        <begin position="2013"/>
        <end position="2071"/>
    </location>
</feature>
<feature type="repeat" description="33">
    <location>
        <begin position="2072"/>
        <end position="2127"/>
    </location>
</feature>
<feature type="repeat" description="34">
    <location>
        <begin position="2129"/>
        <end position="2188"/>
    </location>
</feature>
<feature type="repeat" description="35">
    <location>
        <begin position="2189"/>
        <end position="2247"/>
    </location>
</feature>
<feature type="repeat" description="36">
    <location>
        <begin position="2248"/>
        <end position="2306"/>
    </location>
</feature>
<feature type="repeat" description="37">
    <location>
        <begin position="2307"/>
        <end position="2365"/>
    </location>
</feature>
<feature type="repeat" description="38">
    <location>
        <begin position="2366"/>
        <end position="2424"/>
    </location>
</feature>
<feature type="repeat" description="39">
    <location>
        <begin position="2425"/>
        <end position="2483"/>
    </location>
</feature>
<feature type="repeat" description="40">
    <location>
        <begin position="2484"/>
        <end position="2540"/>
    </location>
</feature>
<feature type="repeat" description="41">
    <location>
        <begin position="2542"/>
        <end position="2601"/>
    </location>
</feature>
<feature type="repeat" description="42">
    <location>
        <begin position="2602"/>
        <end position="2653"/>
    </location>
</feature>
<feature type="repeat" description="43">
    <location>
        <begin position="2654"/>
        <end position="2719"/>
    </location>
</feature>
<feature type="repeat" description="44">
    <location>
        <begin position="2720"/>
        <end position="2770"/>
    </location>
</feature>
<feature type="repeat" description="45">
    <location>
        <begin position="2772"/>
        <end position="2837"/>
    </location>
</feature>
<feature type="repeat" description="46">
    <location>
        <begin position="2838"/>
        <end position="2896"/>
    </location>
</feature>
<feature type="repeat" description="47">
    <location>
        <begin position="2897"/>
        <end position="2955"/>
    </location>
</feature>
<feature type="repeat" description="48">
    <location>
        <begin position="2956"/>
        <end position="3014"/>
    </location>
</feature>
<feature type="repeat" description="49">
    <location>
        <begin position="3015"/>
        <end position="3073"/>
    </location>
</feature>
<feature type="repeat" description="50">
    <location>
        <begin position="3074"/>
        <end position="3132"/>
    </location>
</feature>
<feature type="repeat" description="51">
    <location>
        <begin position="3133"/>
        <end position="3191"/>
    </location>
</feature>
<feature type="repeat" description="52">
    <location>
        <begin position="3192"/>
        <end position="3247"/>
    </location>
</feature>
<feature type="repeat" description="53">
    <location>
        <begin position="3249"/>
        <end position="3308"/>
    </location>
</feature>
<feature type="repeat" description="54">
    <location>
        <begin position="3309"/>
        <end position="3367"/>
    </location>
</feature>
<feature type="repeat" description="55">
    <location>
        <begin position="3368"/>
        <end position="3426"/>
    </location>
</feature>
<feature type="repeat" description="56">
    <location>
        <begin position="3427"/>
        <end position="3485"/>
    </location>
</feature>
<feature type="repeat" description="57">
    <location>
        <begin position="3486"/>
        <end position="3544"/>
    </location>
</feature>
<feature type="repeat" description="58">
    <location>
        <begin position="3604"/>
        <end position="3662"/>
    </location>
</feature>
<feature type="repeat" description="59">
    <location>
        <begin position="3663"/>
        <end position="3727"/>
    </location>
</feature>
<feature type="domain" description="EGF-like" evidence="2">
    <location>
        <begin position="4131"/>
        <end position="4170"/>
    </location>
</feature>
<feature type="domain" description="SEA" evidence="3">
    <location>
        <begin position="4184"/>
        <end position="4291"/>
    </location>
</feature>
<feature type="region of interest" description="Disordered" evidence="4">
    <location>
        <begin position="88"/>
        <end position="159"/>
    </location>
</feature>
<feature type="region of interest" description="59 X approximate tandem repeats">
    <location>
        <begin position="185"/>
        <end position="3727"/>
    </location>
</feature>
<feature type="region of interest" description="Disordered" evidence="4">
    <location>
        <begin position="188"/>
        <end position="223"/>
    </location>
</feature>
<feature type="region of interest" description="Disordered" evidence="4">
    <location>
        <begin position="248"/>
        <end position="277"/>
    </location>
</feature>
<feature type="region of interest" description="Disordered" evidence="4">
    <location>
        <begin position="306"/>
        <end position="344"/>
    </location>
</feature>
<feature type="region of interest" description="Disordered" evidence="4">
    <location>
        <begin position="425"/>
        <end position="629"/>
    </location>
</feature>
<feature type="region of interest" description="Disordered" evidence="4">
    <location>
        <begin position="644"/>
        <end position="868"/>
    </location>
</feature>
<feature type="region of interest" description="Disordered" evidence="4">
    <location>
        <begin position="886"/>
        <end position="1104"/>
    </location>
</feature>
<feature type="region of interest" description="Disordered" evidence="4">
    <location>
        <begin position="1116"/>
        <end position="1163"/>
    </location>
</feature>
<feature type="region of interest" description="Disordered" evidence="4">
    <location>
        <begin position="1175"/>
        <end position="1279"/>
    </location>
</feature>
<feature type="region of interest" description="Disordered" evidence="4">
    <location>
        <begin position="1296"/>
        <end position="1338"/>
    </location>
</feature>
<feature type="region of interest" description="Disordered" evidence="4">
    <location>
        <begin position="1360"/>
        <end position="1516"/>
    </location>
</feature>
<feature type="region of interest" description="Disordered" evidence="4">
    <location>
        <begin position="1537"/>
        <end position="1575"/>
    </location>
</feature>
<feature type="region of interest" description="Disordered" evidence="4">
    <location>
        <begin position="1590"/>
        <end position="1930"/>
    </location>
</feature>
<feature type="region of interest" description="Disordered" evidence="4">
    <location>
        <begin position="1947"/>
        <end position="2163"/>
    </location>
</feature>
<feature type="region of interest" description="Disordered" evidence="4">
    <location>
        <begin position="2177"/>
        <end position="2281"/>
    </location>
</feature>
<feature type="region of interest" description="Disordered" evidence="4">
    <location>
        <begin position="2295"/>
        <end position="2501"/>
    </location>
</feature>
<feature type="region of interest" description="Disordered" evidence="4">
    <location>
        <begin position="2524"/>
        <end position="2630"/>
    </location>
</feature>
<feature type="region of interest" description="Disordered" evidence="4">
    <location>
        <begin position="2647"/>
        <end position="2693"/>
    </location>
</feature>
<feature type="region of interest" description="Disordered" evidence="4">
    <location>
        <begin position="2709"/>
        <end position="2751"/>
    </location>
</feature>
<feature type="region of interest" description="Disordered" evidence="4">
    <location>
        <begin position="2765"/>
        <end position="2853"/>
    </location>
</feature>
<feature type="region of interest" description="Disordered" evidence="4">
    <location>
        <begin position="2879"/>
        <end position="2925"/>
    </location>
</feature>
<feature type="region of interest" description="Disordered" evidence="4">
    <location>
        <begin position="2942"/>
        <end position="3167"/>
    </location>
</feature>
<feature type="region of interest" description="Disordered" evidence="4">
    <location>
        <begin position="3182"/>
        <end position="3577"/>
    </location>
</feature>
<feature type="region of interest" description="Disordered" evidence="4">
    <location>
        <begin position="3589"/>
        <end position="3635"/>
    </location>
</feature>
<feature type="region of interest" description="Disordered" evidence="4">
    <location>
        <begin position="3667"/>
        <end position="3701"/>
    </location>
</feature>
<feature type="region of interest" description="Disordered" evidence="4">
    <location>
        <begin position="3785"/>
        <end position="3812"/>
    </location>
</feature>
<feature type="region of interest" description="Disordered" evidence="4">
    <location>
        <begin position="3829"/>
        <end position="3849"/>
    </location>
</feature>
<feature type="region of interest" description="Disordered" evidence="4">
    <location>
        <begin position="3892"/>
        <end position="3914"/>
    </location>
</feature>
<feature type="region of interest" description="Disordered" evidence="4">
    <location>
        <begin position="3965"/>
        <end position="3988"/>
    </location>
</feature>
<feature type="region of interest" description="Disordered" evidence="4">
    <location>
        <begin position="4008"/>
        <end position="4129"/>
    </location>
</feature>
<feature type="compositionally biased region" description="Polar residues" evidence="4">
    <location>
        <begin position="88"/>
        <end position="105"/>
    </location>
</feature>
<feature type="compositionally biased region" description="Low complexity" evidence="4">
    <location>
        <begin position="106"/>
        <end position="146"/>
    </location>
</feature>
<feature type="compositionally biased region" description="Polar residues" evidence="4">
    <location>
        <begin position="148"/>
        <end position="159"/>
    </location>
</feature>
<feature type="compositionally biased region" description="Low complexity" evidence="4">
    <location>
        <begin position="188"/>
        <end position="210"/>
    </location>
</feature>
<feature type="compositionally biased region" description="Polar residues" evidence="4">
    <location>
        <begin position="211"/>
        <end position="223"/>
    </location>
</feature>
<feature type="compositionally biased region" description="Low complexity" evidence="4">
    <location>
        <begin position="308"/>
        <end position="323"/>
    </location>
</feature>
<feature type="compositionally biased region" description="Polar residues" evidence="4">
    <location>
        <begin position="324"/>
        <end position="344"/>
    </location>
</feature>
<feature type="compositionally biased region" description="Low complexity" evidence="4">
    <location>
        <begin position="425"/>
        <end position="441"/>
    </location>
</feature>
<feature type="compositionally biased region" description="Polar residues" evidence="4">
    <location>
        <begin position="442"/>
        <end position="483"/>
    </location>
</feature>
<feature type="compositionally biased region" description="Low complexity" evidence="4">
    <location>
        <begin position="484"/>
        <end position="497"/>
    </location>
</feature>
<feature type="compositionally biased region" description="Polar residues" evidence="4">
    <location>
        <begin position="498"/>
        <end position="528"/>
    </location>
</feature>
<feature type="compositionally biased region" description="Low complexity" evidence="4">
    <location>
        <begin position="529"/>
        <end position="573"/>
    </location>
</feature>
<feature type="compositionally biased region" description="Low complexity" evidence="4">
    <location>
        <begin position="584"/>
        <end position="618"/>
    </location>
</feature>
<feature type="compositionally biased region" description="Polar residues" evidence="4">
    <location>
        <begin position="619"/>
        <end position="629"/>
    </location>
</feature>
<feature type="compositionally biased region" description="Polar residues" evidence="4">
    <location>
        <begin position="644"/>
        <end position="660"/>
    </location>
</feature>
<feature type="compositionally biased region" description="Low complexity" evidence="4">
    <location>
        <begin position="661"/>
        <end position="677"/>
    </location>
</feature>
<feature type="compositionally biased region" description="Polar residues" evidence="4">
    <location>
        <begin position="678"/>
        <end position="705"/>
    </location>
</feature>
<feature type="compositionally biased region" description="Low complexity" evidence="4">
    <location>
        <begin position="706"/>
        <end position="733"/>
    </location>
</feature>
<feature type="compositionally biased region" description="Polar residues" evidence="4">
    <location>
        <begin position="737"/>
        <end position="754"/>
    </location>
</feature>
<feature type="compositionally biased region" description="Low complexity" evidence="4">
    <location>
        <begin position="755"/>
        <end position="776"/>
    </location>
</feature>
<feature type="compositionally biased region" description="Polar residues" evidence="4">
    <location>
        <begin position="777"/>
        <end position="832"/>
    </location>
</feature>
<feature type="compositionally biased region" description="Low complexity" evidence="4">
    <location>
        <begin position="833"/>
        <end position="849"/>
    </location>
</feature>
<feature type="compositionally biased region" description="Polar residues" evidence="4">
    <location>
        <begin position="854"/>
        <end position="868"/>
    </location>
</feature>
<feature type="compositionally biased region" description="Low complexity" evidence="4">
    <location>
        <begin position="886"/>
        <end position="900"/>
    </location>
</feature>
<feature type="compositionally biased region" description="Polar residues" evidence="4">
    <location>
        <begin position="901"/>
        <end position="944"/>
    </location>
</feature>
<feature type="compositionally biased region" description="Low complexity" evidence="4">
    <location>
        <begin position="945"/>
        <end position="972"/>
    </location>
</feature>
<feature type="compositionally biased region" description="Polar residues" evidence="4">
    <location>
        <begin position="973"/>
        <end position="1011"/>
    </location>
</feature>
<feature type="compositionally biased region" description="Low complexity" evidence="4">
    <location>
        <begin position="1012"/>
        <end position="1021"/>
    </location>
</feature>
<feature type="compositionally biased region" description="Polar residues" evidence="4">
    <location>
        <begin position="1029"/>
        <end position="1062"/>
    </location>
</feature>
<feature type="compositionally biased region" description="Low complexity" evidence="4">
    <location>
        <begin position="1063"/>
        <end position="1090"/>
    </location>
</feature>
<feature type="compositionally biased region" description="Polar residues" evidence="4">
    <location>
        <begin position="1091"/>
        <end position="1104"/>
    </location>
</feature>
<feature type="compositionally biased region" description="Polar residues" evidence="4">
    <location>
        <begin position="1116"/>
        <end position="1132"/>
    </location>
</feature>
<feature type="compositionally biased region" description="Low complexity" evidence="4">
    <location>
        <begin position="1133"/>
        <end position="1149"/>
    </location>
</feature>
<feature type="compositionally biased region" description="Polar residues" evidence="4">
    <location>
        <begin position="1175"/>
        <end position="1198"/>
    </location>
</feature>
<feature type="compositionally biased region" description="Polar residues" evidence="4">
    <location>
        <begin position="1205"/>
        <end position="1222"/>
    </location>
</feature>
<feature type="compositionally biased region" description="Low complexity" evidence="4">
    <location>
        <begin position="1237"/>
        <end position="1279"/>
    </location>
</feature>
<feature type="compositionally biased region" description="Polar residues" evidence="4">
    <location>
        <begin position="1310"/>
        <end position="1320"/>
    </location>
</feature>
<feature type="compositionally biased region" description="Polar residues" evidence="4">
    <location>
        <begin position="1326"/>
        <end position="1338"/>
    </location>
</feature>
<feature type="compositionally biased region" description="Polar residues" evidence="4">
    <location>
        <begin position="1360"/>
        <end position="1394"/>
    </location>
</feature>
<feature type="compositionally biased region" description="Low complexity" evidence="4">
    <location>
        <begin position="1395"/>
        <end position="1415"/>
    </location>
</feature>
<feature type="compositionally biased region" description="Low complexity" evidence="4">
    <location>
        <begin position="1423"/>
        <end position="1442"/>
    </location>
</feature>
<feature type="compositionally biased region" description="Polar residues" evidence="4">
    <location>
        <begin position="1461"/>
        <end position="1483"/>
    </location>
</feature>
<feature type="compositionally biased region" description="Low complexity" evidence="4">
    <location>
        <begin position="1484"/>
        <end position="1499"/>
    </location>
</feature>
<feature type="compositionally biased region" description="Polar residues" evidence="4">
    <location>
        <begin position="1504"/>
        <end position="1516"/>
    </location>
</feature>
<feature type="compositionally biased region" description="Low complexity" evidence="4">
    <location>
        <begin position="1537"/>
        <end position="1547"/>
    </location>
</feature>
<feature type="compositionally biased region" description="Polar residues" evidence="4">
    <location>
        <begin position="1548"/>
        <end position="1575"/>
    </location>
</feature>
<feature type="compositionally biased region" description="Polar residues" evidence="4">
    <location>
        <begin position="1590"/>
        <end position="1604"/>
    </location>
</feature>
<feature type="compositionally biased region" description="Low complexity" evidence="4">
    <location>
        <begin position="1605"/>
        <end position="1620"/>
    </location>
</feature>
<feature type="compositionally biased region" description="Polar residues" evidence="4">
    <location>
        <begin position="1621"/>
        <end position="1673"/>
    </location>
</feature>
<feature type="compositionally biased region" description="Polar residues" evidence="4">
    <location>
        <begin position="1679"/>
        <end position="1775"/>
    </location>
</feature>
<feature type="compositionally biased region" description="Low complexity" evidence="4">
    <location>
        <begin position="1776"/>
        <end position="1797"/>
    </location>
</feature>
<feature type="compositionally biased region" description="Polar residues" evidence="4">
    <location>
        <begin position="1798"/>
        <end position="1836"/>
    </location>
</feature>
<feature type="compositionally biased region" description="Low complexity" evidence="4">
    <location>
        <begin position="1837"/>
        <end position="1852"/>
    </location>
</feature>
<feature type="compositionally biased region" description="Polar residues" evidence="4">
    <location>
        <begin position="1856"/>
        <end position="1883"/>
    </location>
</feature>
<feature type="compositionally biased region" description="Low complexity" evidence="4">
    <location>
        <begin position="1884"/>
        <end position="1900"/>
    </location>
</feature>
<feature type="compositionally biased region" description="Polar residues" evidence="4">
    <location>
        <begin position="1901"/>
        <end position="1921"/>
    </location>
</feature>
<feature type="compositionally biased region" description="Polar residues" evidence="4">
    <location>
        <begin position="1947"/>
        <end position="1976"/>
    </location>
</feature>
<feature type="compositionally biased region" description="Low complexity" evidence="4">
    <location>
        <begin position="1984"/>
        <end position="2033"/>
    </location>
</feature>
<feature type="compositionally biased region" description="Polar residues" evidence="4">
    <location>
        <begin position="2034"/>
        <end position="2043"/>
    </location>
</feature>
<feature type="compositionally biased region" description="Polar residues" evidence="4">
    <location>
        <begin position="2051"/>
        <end position="2077"/>
    </location>
</feature>
<feature type="compositionally biased region" description="Low complexity" evidence="4">
    <location>
        <begin position="2078"/>
        <end position="2091"/>
    </location>
</feature>
<feature type="compositionally biased region" description="Polar residues" evidence="4">
    <location>
        <begin position="2092"/>
        <end position="2156"/>
    </location>
</feature>
<feature type="compositionally biased region" description="Low complexity" evidence="4">
    <location>
        <begin position="2177"/>
        <end position="2196"/>
    </location>
</feature>
<feature type="compositionally biased region" description="Polar residues" evidence="4">
    <location>
        <begin position="2197"/>
        <end position="2240"/>
    </location>
</feature>
<feature type="compositionally biased region" description="Low complexity" evidence="4">
    <location>
        <begin position="2241"/>
        <end position="2268"/>
    </location>
</feature>
<feature type="compositionally biased region" description="Polar residues" evidence="4">
    <location>
        <begin position="2269"/>
        <end position="2281"/>
    </location>
</feature>
<feature type="compositionally biased region" description="Polar residues" evidence="4">
    <location>
        <begin position="2295"/>
        <end position="2307"/>
    </location>
</feature>
<feature type="compositionally biased region" description="Low complexity" evidence="4">
    <location>
        <begin position="2308"/>
        <end position="2317"/>
    </location>
</feature>
<feature type="compositionally biased region" description="Polar residues" evidence="4">
    <location>
        <begin position="2325"/>
        <end position="2358"/>
    </location>
</feature>
<feature type="compositionally biased region" description="Low complexity" evidence="4">
    <location>
        <begin position="2359"/>
        <end position="2371"/>
    </location>
</feature>
<feature type="compositionally biased region" description="Polar residues" evidence="4">
    <location>
        <begin position="2372"/>
        <end position="2395"/>
    </location>
</feature>
<feature type="compositionally biased region" description="Low complexity" evidence="4">
    <location>
        <begin position="2396"/>
        <end position="2445"/>
    </location>
</feature>
<feature type="compositionally biased region" description="Low complexity" evidence="4">
    <location>
        <begin position="2462"/>
        <end position="2499"/>
    </location>
</feature>
<feature type="compositionally biased region" description="Polar residues" evidence="4">
    <location>
        <begin position="2524"/>
        <end position="2547"/>
    </location>
</feature>
<feature type="compositionally biased region" description="Low complexity" evidence="4">
    <location>
        <begin position="2548"/>
        <end position="2563"/>
    </location>
</feature>
<feature type="compositionally biased region" description="Polar residues" evidence="4">
    <location>
        <begin position="2564"/>
        <end position="2576"/>
    </location>
</feature>
<feature type="compositionally biased region" description="Low complexity" evidence="4">
    <location>
        <begin position="2586"/>
        <end position="2617"/>
    </location>
</feature>
<feature type="compositionally biased region" description="Polar residues" evidence="4">
    <location>
        <begin position="2618"/>
        <end position="2628"/>
    </location>
</feature>
<feature type="compositionally biased region" description="Low complexity" evidence="4">
    <location>
        <begin position="2654"/>
        <end position="2681"/>
    </location>
</feature>
<feature type="compositionally biased region" description="Polar residues" evidence="4">
    <location>
        <begin position="2682"/>
        <end position="2693"/>
    </location>
</feature>
<feature type="compositionally biased region" description="Low complexity" evidence="4">
    <location>
        <begin position="2710"/>
        <end position="2740"/>
    </location>
</feature>
<feature type="compositionally biased region" description="Polar residues" evidence="4">
    <location>
        <begin position="2741"/>
        <end position="2751"/>
    </location>
</feature>
<feature type="compositionally biased region" description="Low complexity" evidence="4">
    <location>
        <begin position="2765"/>
        <end position="2816"/>
    </location>
</feature>
<feature type="compositionally biased region" description="Low complexity" evidence="4">
    <location>
        <begin position="2829"/>
        <end position="2853"/>
    </location>
</feature>
<feature type="compositionally biased region" description="Polar residues" evidence="4">
    <location>
        <begin position="2879"/>
        <end position="2900"/>
    </location>
</feature>
<feature type="compositionally biased region" description="Low complexity" evidence="4">
    <location>
        <begin position="2901"/>
        <end position="2917"/>
    </location>
</feature>
<feature type="compositionally biased region" description="Low complexity" evidence="4">
    <location>
        <begin position="2950"/>
        <end position="2976"/>
    </location>
</feature>
<feature type="compositionally biased region" description="Polar residues" evidence="4">
    <location>
        <begin position="2988"/>
        <end position="3009"/>
    </location>
</feature>
<feature type="compositionally biased region" description="Low complexity" evidence="4">
    <location>
        <begin position="3010"/>
        <end position="3031"/>
    </location>
</feature>
<feature type="compositionally biased region" description="Polar residues" evidence="4">
    <location>
        <begin position="3037"/>
        <end position="3057"/>
    </location>
</feature>
<feature type="compositionally biased region" description="Low complexity" evidence="4">
    <location>
        <begin position="3073"/>
        <end position="3089"/>
    </location>
</feature>
<feature type="compositionally biased region" description="Low complexity" evidence="4">
    <location>
        <begin position="3104"/>
        <end position="3140"/>
    </location>
</feature>
<feature type="compositionally biased region" description="Polar residues" evidence="4">
    <location>
        <begin position="3141"/>
        <end position="3166"/>
    </location>
</feature>
<feature type="compositionally biased region" description="Low complexity" evidence="4">
    <location>
        <begin position="3185"/>
        <end position="3211"/>
    </location>
</feature>
<feature type="compositionally biased region" description="Polar residues" evidence="4">
    <location>
        <begin position="3212"/>
        <end position="3253"/>
    </location>
</feature>
<feature type="compositionally biased region" description="Low complexity" evidence="4">
    <location>
        <begin position="3254"/>
        <end position="3267"/>
    </location>
</feature>
<feature type="compositionally biased region" description="Polar residues" evidence="4">
    <location>
        <begin position="3268"/>
        <end position="3288"/>
    </location>
</feature>
<feature type="compositionally biased region" description="Low complexity" evidence="4">
    <location>
        <begin position="3289"/>
        <end position="3314"/>
    </location>
</feature>
<feature type="compositionally biased region" description="Polar residues" evidence="4">
    <location>
        <begin position="3329"/>
        <end position="3357"/>
    </location>
</feature>
<feature type="compositionally biased region" description="Low complexity" evidence="4">
    <location>
        <begin position="3358"/>
        <end position="3375"/>
    </location>
</feature>
<feature type="compositionally biased region" description="Polar residues" evidence="4">
    <location>
        <begin position="3376"/>
        <end position="3401"/>
    </location>
</feature>
<feature type="compositionally biased region" description="Low complexity" evidence="4">
    <location>
        <begin position="3405"/>
        <end position="3414"/>
    </location>
</feature>
<feature type="compositionally biased region" description="Polar residues" evidence="4">
    <location>
        <begin position="3415"/>
        <end position="3441"/>
    </location>
</feature>
<feature type="compositionally biased region" description="Polar residues" evidence="4">
    <location>
        <begin position="3447"/>
        <end position="3475"/>
    </location>
</feature>
<feature type="compositionally biased region" description="Low complexity" evidence="4">
    <location>
        <begin position="3476"/>
        <end position="3501"/>
    </location>
</feature>
<feature type="compositionally biased region" description="Polar residues" evidence="4">
    <location>
        <begin position="3502"/>
        <end position="3549"/>
    </location>
</feature>
<feature type="compositionally biased region" description="Polar residues" evidence="4">
    <location>
        <begin position="3558"/>
        <end position="3571"/>
    </location>
</feature>
<feature type="compositionally biased region" description="Low complexity" evidence="4">
    <location>
        <begin position="3589"/>
        <end position="3616"/>
    </location>
</feature>
<feature type="compositionally biased region" description="Polar residues" evidence="4">
    <location>
        <begin position="3626"/>
        <end position="3635"/>
    </location>
</feature>
<feature type="compositionally biased region" description="Low complexity" evidence="4">
    <location>
        <begin position="3667"/>
        <end position="3679"/>
    </location>
</feature>
<feature type="compositionally biased region" description="Polar residues" evidence="4">
    <location>
        <begin position="3690"/>
        <end position="3701"/>
    </location>
</feature>
<feature type="compositionally biased region" description="Polar residues" evidence="4">
    <location>
        <begin position="3785"/>
        <end position="3806"/>
    </location>
</feature>
<feature type="compositionally biased region" description="Low complexity" evidence="4">
    <location>
        <begin position="3967"/>
        <end position="3988"/>
    </location>
</feature>
<feature type="compositionally biased region" description="Low complexity" evidence="4">
    <location>
        <begin position="4008"/>
        <end position="4083"/>
    </location>
</feature>
<feature type="compositionally biased region" description="Low complexity" evidence="4">
    <location>
        <begin position="4090"/>
        <end position="4129"/>
    </location>
</feature>
<feature type="site" description="Cleavage" evidence="1">
    <location>
        <begin position="4243"/>
        <end position="4244"/>
    </location>
</feature>
<feature type="glycosylation site" description="N-linked (GlcNAc...) asparagine" evidence="1">
    <location>
        <position position="471"/>
    </location>
</feature>
<feature type="glycosylation site" description="N-linked (GlcNAc...) asparagine" evidence="1">
    <location>
        <position position="696"/>
    </location>
</feature>
<feature type="glycosylation site" description="N-linked (GlcNAc...) asparagine" evidence="1">
    <location>
        <position position="898"/>
    </location>
</feature>
<feature type="glycosylation site" description="N-linked (GlcNAc...) asparagine" evidence="1">
    <location>
        <position position="1345"/>
    </location>
</feature>
<feature type="glycosylation site" description="N-linked (GlcNAc...) asparagine" evidence="1">
    <location>
        <position position="2077"/>
    </location>
</feature>
<feature type="glycosylation site" description="N-linked (GlcNAc...) asparagine" evidence="1">
    <location>
        <position position="2194"/>
    </location>
</feature>
<feature type="glycosylation site" description="N-linked (GlcNAc...) asparagine" evidence="1">
    <location>
        <position position="3344"/>
    </location>
</feature>
<feature type="glycosylation site" description="N-linked (GlcNAc...) asparagine" evidence="1">
    <location>
        <position position="4116"/>
    </location>
</feature>
<feature type="glycosylation site" description="N-linked (GlcNAc...) asparagine" evidence="1">
    <location>
        <position position="4205"/>
    </location>
</feature>
<feature type="glycosylation site" description="N-linked (GlcNAc...) asparagine" evidence="1">
    <location>
        <position position="4236"/>
    </location>
</feature>
<feature type="glycosylation site" description="N-linked (GlcNAc...) asparagine" evidence="1">
    <location>
        <position position="4267"/>
    </location>
</feature>
<feature type="glycosylation site" description="N-linked (GlcNAc...) asparagine" evidence="1">
    <location>
        <position position="4297"/>
    </location>
</feature>
<feature type="glycosylation site" description="N-linked (GlcNAc...) asparagine" evidence="1">
    <location>
        <position position="4305"/>
    </location>
</feature>
<feature type="disulfide bond" evidence="2">
    <location>
        <begin position="4135"/>
        <end position="4147"/>
    </location>
</feature>
<feature type="disulfide bond" evidence="2">
    <location>
        <begin position="4140"/>
        <end position="4158"/>
    </location>
</feature>
<feature type="disulfide bond" evidence="2">
    <location>
        <begin position="4160"/>
        <end position="4169"/>
    </location>
</feature>
<feature type="splice variant" id="VSP_032648" description="In isoform 2." evidence="10">
    <original>RLGSVVVEHDVLLRTKYTPEYK</original>
    <variation>HDVFQHHWHPSAKHYGDPVRP</variation>
    <location>
        <begin position="4241"/>
        <end position="4262"/>
    </location>
</feature>
<feature type="splice variant" id="VSP_032649" description="In isoform 2." evidence="10">
    <location>
        <begin position="4363"/>
        <end position="4493"/>
    </location>
</feature>
<feature type="sequence variant" id="VAR_040047" description="In dbSNP:rs10229731.">
    <original>K</original>
    <variation>Q</variation>
    <location>
        <position position="227"/>
    </location>
</feature>
<feature type="sequence variant" id="VAR_040048" description="In dbSNP:rs10259584.">
    <original>G</original>
    <variation>E</variation>
    <location>
        <position position="272"/>
    </location>
</feature>
<feature type="sequence variant" id="VAR_061489" description="In dbSNP:rs56103274.">
    <original>A</original>
    <variation>T</variation>
    <location>
        <position position="427"/>
    </location>
</feature>
<feature type="sequence variant" id="VAR_061490" description="In dbSNP:rs34834039.">
    <original>P</original>
    <variation>L</variation>
    <location>
        <position position="571"/>
    </location>
</feature>
<feature type="sequence variant" id="VAR_061491" description="In dbSNP:rs149445753.">
    <original>P</original>
    <variation>R</variation>
    <location>
        <position position="925"/>
    </location>
</feature>
<feature type="sequence variant" id="VAR_040049" description="In dbSNP:rs10238201.">
    <original>R</original>
    <variation>S</variation>
    <location>
        <position position="942"/>
    </location>
</feature>
<feature type="sequence variant" id="VAR_040050" description="In dbSNP:rs4729646.">
    <original>T</original>
    <variation>M</variation>
    <location>
        <position position="982"/>
    </location>
</feature>
<feature type="sequence variant" id="VAR_040051" description="In dbSNP:rs4729647.">
    <original>I</original>
    <variation>T</variation>
    <location>
        <position position="1130"/>
    </location>
</feature>
<feature type="sequence variant" id="VAR_040052" description="In dbSNP:rs10265276.">
    <original>S</original>
    <variation>T</variation>
    <location>
        <position position="1242"/>
    </location>
</feature>
<feature type="sequence variant" id="VAR_040053" description="In dbSNP:rs4729652.">
    <original>T</original>
    <variation>N</variation>
    <location>
        <position position="1246"/>
    </location>
</feature>
<feature type="sequence variant" id="VAR_040054" description="In dbSNP:rs4729651.">
    <original>T</original>
    <variation>S</variation>
    <location>
        <position position="1246"/>
    </location>
</feature>
<feature type="sequence variant" id="VAR_040055" description="In dbSNP:rs4729653.">
    <original>P</original>
    <variation>A</variation>
    <location>
        <position position="1249"/>
    </location>
</feature>
<feature type="sequence variant" id="VAR_040056" description="In dbSNP:rs4269454." evidence="9">
    <original>L</original>
    <variation>P</variation>
    <location>
        <position position="1348"/>
    </location>
</feature>
<feature type="sequence variant" id="VAR_040057" description="In dbSNP:rs4367469." evidence="9">
    <original>C</original>
    <variation>R</variation>
    <location>
        <position position="1375"/>
    </location>
</feature>
<feature type="sequence variant" id="VAR_061492" description="In dbSNP:rs7780935." evidence="9">
    <original>V</original>
    <variation>A</variation>
    <location>
        <position position="1480"/>
    </location>
</feature>
<feature type="sequence variant" id="VAR_061493" description="In dbSNP:rs28593004.">
    <original>A</original>
    <variation>T</variation>
    <location>
        <position position="2096"/>
    </location>
</feature>
<feature type="sequence variant" id="VAR_061494" description="In dbSNP:rs28555173.">
    <original>R</original>
    <variation>G</variation>
    <location>
        <position position="2159"/>
    </location>
</feature>
<feature type="sequence variant" id="VAR_061495" description="In dbSNP:rs35988443.">
    <original>S</original>
    <variation>N</variation>
    <location>
        <position position="3299"/>
    </location>
</feature>
<feature type="sequence variant" id="VAR_040058" description="In dbSNP:rs6946812.">
    <original>D</original>
    <variation>N</variation>
    <location>
        <position position="4334"/>
    </location>
</feature>
<feature type="sequence variant" id="VAR_040059" description="In dbSNP:rs9656065.">
    <original>R</original>
    <variation>Q</variation>
    <location>
        <position position="4482"/>
    </location>
</feature>
<feature type="sequence conflict" description="In Ref. 1; CAE54435/CAE54436." evidence="11" ref="1">
    <original>D</original>
    <variation>G</variation>
    <location>
        <position position="28"/>
    </location>
</feature>
<feature type="sequence conflict" description="In Ref. 1; CAE54435/CAE54436." evidence="11" ref="1">
    <original>A</original>
    <variation>T</variation>
    <location>
        <position position="65"/>
    </location>
</feature>
<feature type="sequence conflict" description="In Ref. 1; CAE54435/CAE54436." evidence="11" ref="1">
    <original>S</original>
    <variation>P</variation>
    <location>
        <position position="132"/>
    </location>
</feature>
<feature type="sequence conflict" description="In Ref. 4; AAL89737." evidence="11" ref="4">
    <original>T</original>
    <variation>S</variation>
    <location>
        <position position="3481"/>
    </location>
</feature>
<feature type="sequence conflict" description="In Ref. 4; AAL89737." evidence="11" ref="4">
    <original>T</original>
    <variation>N</variation>
    <location>
        <position position="3491"/>
    </location>
</feature>
<protein>
    <recommendedName>
        <fullName>Mucin-17</fullName>
        <shortName>MUC-17</shortName>
    </recommendedName>
    <alternativeName>
        <fullName>Small intestinal mucin-3</fullName>
        <shortName>MUC-3</shortName>
    </alternativeName>
</protein>
<dbReference type="EMBL" id="AJ606307">
    <property type="protein sequence ID" value="CAE54435.1"/>
    <property type="molecule type" value="mRNA"/>
</dbReference>
<dbReference type="EMBL" id="AJ606308">
    <property type="protein sequence ID" value="CAE54436.1"/>
    <property type="molecule type" value="mRNA"/>
</dbReference>
<dbReference type="EMBL" id="AC105446">
    <property type="status" value="NOT_ANNOTATED_CDS"/>
    <property type="molecule type" value="Genomic_DNA"/>
</dbReference>
<dbReference type="EMBL" id="AF016693">
    <property type="protein sequence ID" value="AAB71686.1"/>
    <property type="molecule type" value="mRNA"/>
</dbReference>
<dbReference type="EMBL" id="AF430017">
    <property type="protein sequence ID" value="AAL89737.1"/>
    <property type="molecule type" value="mRNA"/>
</dbReference>
<dbReference type="CCDS" id="CCDS34711.1">
    <molecule id="Q685J3-1"/>
</dbReference>
<dbReference type="PIR" id="PC4396">
    <property type="entry name" value="PC4396"/>
</dbReference>
<dbReference type="RefSeq" id="NP_001035194.1">
    <molecule id="Q685J3-1"/>
    <property type="nucleotide sequence ID" value="NM_001040105.2"/>
</dbReference>
<dbReference type="SMR" id="Q685J3"/>
<dbReference type="BioGRID" id="126608">
    <property type="interactions" value="2"/>
</dbReference>
<dbReference type="FunCoup" id="Q685J3">
    <property type="interactions" value="25"/>
</dbReference>
<dbReference type="STRING" id="9606.ENSP00000302716"/>
<dbReference type="GlyCosmos" id="Q685J3">
    <property type="glycosylation" value="13 sites, No reported glycans"/>
</dbReference>
<dbReference type="GlyGen" id="Q685J3">
    <property type="glycosylation" value="33 sites, 1 O-linked glycan (5 sites)"/>
</dbReference>
<dbReference type="iPTMnet" id="Q685J3"/>
<dbReference type="PhosphoSitePlus" id="Q685J3"/>
<dbReference type="BioMuta" id="MUC17"/>
<dbReference type="DMDM" id="296439228"/>
<dbReference type="jPOST" id="Q685J3"/>
<dbReference type="MassIVE" id="Q685J3"/>
<dbReference type="PaxDb" id="9606-ENSP00000302716"/>
<dbReference type="PeptideAtlas" id="Q685J3"/>
<dbReference type="ProteomicsDB" id="65991">
    <molecule id="Q685J3-1"/>
</dbReference>
<dbReference type="ProteomicsDB" id="65992">
    <molecule id="Q685J3-2"/>
</dbReference>
<dbReference type="ABCD" id="Q685J3">
    <property type="antibodies" value="2 sequenced antibodies"/>
</dbReference>
<dbReference type="Antibodypedia" id="16706">
    <property type="antibodies" value="79 antibodies from 16 providers"/>
</dbReference>
<dbReference type="CPTC" id="Q685J3">
    <property type="antibodies" value="3 antibodies"/>
</dbReference>
<dbReference type="DNASU" id="140453"/>
<dbReference type="Ensembl" id="ENST00000306151.9">
    <molecule id="Q685J3-1"/>
    <property type="protein sequence ID" value="ENSP00000302716.4"/>
    <property type="gene ID" value="ENSG00000169876.14"/>
</dbReference>
<dbReference type="GeneID" id="140453"/>
<dbReference type="KEGG" id="hsa:140453"/>
<dbReference type="MANE-Select" id="ENST00000306151.9">
    <property type="protein sequence ID" value="ENSP00000302716.4"/>
    <property type="RefSeq nucleotide sequence ID" value="NM_001040105.2"/>
    <property type="RefSeq protein sequence ID" value="NP_001035194.1"/>
</dbReference>
<dbReference type="UCSC" id="uc003uxp.2">
    <molecule id="Q685J3-1"/>
    <property type="organism name" value="human"/>
</dbReference>
<dbReference type="AGR" id="HGNC:16800"/>
<dbReference type="CTD" id="140453"/>
<dbReference type="DisGeNET" id="140453"/>
<dbReference type="GeneCards" id="MUC17"/>
<dbReference type="HGNC" id="HGNC:16800">
    <property type="gene designation" value="MUC17"/>
</dbReference>
<dbReference type="HPA" id="ENSG00000169876">
    <property type="expression patterns" value="Tissue enriched (intestine)"/>
</dbReference>
<dbReference type="MalaCards" id="MUC17"/>
<dbReference type="MIM" id="608424">
    <property type="type" value="gene"/>
</dbReference>
<dbReference type="neXtProt" id="NX_Q685J3"/>
<dbReference type="OpenTargets" id="ENSG00000169876"/>
<dbReference type="PharmGKB" id="PA31315"/>
<dbReference type="VEuPathDB" id="HostDB:ENSG00000169876"/>
<dbReference type="eggNOG" id="ENOG502SEXN">
    <property type="taxonomic scope" value="Eukaryota"/>
</dbReference>
<dbReference type="GeneTree" id="ENSGT00940000154419"/>
<dbReference type="HOGENOM" id="CLU_223647_0_0_1"/>
<dbReference type="InParanoid" id="Q685J3"/>
<dbReference type="OMA" id="ETMSIHT"/>
<dbReference type="OrthoDB" id="9540185at2759"/>
<dbReference type="PAN-GO" id="Q685J3">
    <property type="GO annotations" value="2 GO annotations based on evolutionary models"/>
</dbReference>
<dbReference type="PhylomeDB" id="Q685J3"/>
<dbReference type="TreeFam" id="TF337883"/>
<dbReference type="PathwayCommons" id="Q685J3"/>
<dbReference type="Reactome" id="R-HSA-5083625">
    <property type="pathway name" value="Defective GALNT3 causes HFTC"/>
</dbReference>
<dbReference type="Reactome" id="R-HSA-5083632">
    <property type="pathway name" value="Defective C1GALT1C1 causes TNPS"/>
</dbReference>
<dbReference type="Reactome" id="R-HSA-5083636">
    <property type="pathway name" value="Defective GALNT12 causes CRCS1"/>
</dbReference>
<dbReference type="Reactome" id="R-HSA-5621480">
    <property type="pathway name" value="Dectin-2 family"/>
</dbReference>
<dbReference type="Reactome" id="R-HSA-913709">
    <property type="pathway name" value="O-linked glycosylation of mucins"/>
</dbReference>
<dbReference type="Reactome" id="R-HSA-977068">
    <property type="pathway name" value="Termination of O-glycan biosynthesis"/>
</dbReference>
<dbReference type="BioGRID-ORCS" id="140453">
    <property type="hits" value="9 hits in 1140 CRISPR screens"/>
</dbReference>
<dbReference type="ChiTaRS" id="MUC17">
    <property type="organism name" value="human"/>
</dbReference>
<dbReference type="GeneWiki" id="MUC17"/>
<dbReference type="GenomeRNAi" id="140453"/>
<dbReference type="Pharos" id="Q685J3">
    <property type="development level" value="Tbio"/>
</dbReference>
<dbReference type="PRO" id="PR:Q685J3"/>
<dbReference type="Proteomes" id="UP000005640">
    <property type="component" value="Chromosome 7"/>
</dbReference>
<dbReference type="RNAct" id="Q685J3">
    <property type="molecule type" value="protein"/>
</dbReference>
<dbReference type="Bgee" id="ENSG00000169876">
    <property type="expression patterns" value="Expressed in duodenum and 64 other cell types or tissues"/>
</dbReference>
<dbReference type="ExpressionAtlas" id="Q685J3">
    <property type="expression patterns" value="baseline and differential"/>
</dbReference>
<dbReference type="GO" id="GO:0016324">
    <property type="term" value="C:apical plasma membrane"/>
    <property type="evidence" value="ECO:0000314"/>
    <property type="project" value="UniProtKB"/>
</dbReference>
<dbReference type="GO" id="GO:0062023">
    <property type="term" value="C:collagen-containing extracellular matrix"/>
    <property type="evidence" value="ECO:0007005"/>
    <property type="project" value="BHF-UCL"/>
</dbReference>
<dbReference type="GO" id="GO:0009897">
    <property type="term" value="C:external side of plasma membrane"/>
    <property type="evidence" value="ECO:0000314"/>
    <property type="project" value="UniProtKB"/>
</dbReference>
<dbReference type="GO" id="GO:0005576">
    <property type="term" value="C:extracellular region"/>
    <property type="evidence" value="ECO:0007669"/>
    <property type="project" value="UniProtKB-SubCell"/>
</dbReference>
<dbReference type="GO" id="GO:0005796">
    <property type="term" value="C:Golgi lumen"/>
    <property type="evidence" value="ECO:0000304"/>
    <property type="project" value="Reactome"/>
</dbReference>
<dbReference type="GO" id="GO:0005886">
    <property type="term" value="C:plasma membrane"/>
    <property type="evidence" value="ECO:0000304"/>
    <property type="project" value="Reactome"/>
</dbReference>
<dbReference type="GO" id="GO:0030197">
    <property type="term" value="F:extracellular matrix constituent, lubricant activity"/>
    <property type="evidence" value="ECO:0007005"/>
    <property type="project" value="BHF-UCL"/>
</dbReference>
<dbReference type="GO" id="GO:0030165">
    <property type="term" value="F:PDZ domain binding"/>
    <property type="evidence" value="ECO:0000353"/>
    <property type="project" value="UniProtKB"/>
</dbReference>
<dbReference type="GO" id="GO:0019725">
    <property type="term" value="P:cellular homeostasis"/>
    <property type="evidence" value="ECO:0000304"/>
    <property type="project" value="UniProtKB"/>
</dbReference>
<dbReference type="FunFam" id="3.30.70.960:FF:000013">
    <property type="entry name" value="Mucin glycoprotein MUC3"/>
    <property type="match status" value="1"/>
</dbReference>
<dbReference type="Gene3D" id="3.30.70.960">
    <property type="entry name" value="SEA domain"/>
    <property type="match status" value="1"/>
</dbReference>
<dbReference type="InterPro" id="IPR000742">
    <property type="entry name" value="EGF-like_dom"/>
</dbReference>
<dbReference type="InterPro" id="IPR053311">
    <property type="entry name" value="Mucosal_Integrity_Assoc"/>
</dbReference>
<dbReference type="InterPro" id="IPR000082">
    <property type="entry name" value="SEA_dom"/>
</dbReference>
<dbReference type="InterPro" id="IPR036364">
    <property type="entry name" value="SEA_dom_sf"/>
</dbReference>
<dbReference type="PANTHER" id="PTHR37999">
    <property type="entry name" value="MUCIN-17"/>
    <property type="match status" value="1"/>
</dbReference>
<dbReference type="PANTHER" id="PTHR37999:SF2">
    <property type="entry name" value="MUCIN-17"/>
    <property type="match status" value="1"/>
</dbReference>
<dbReference type="Pfam" id="PF01390">
    <property type="entry name" value="SEA"/>
    <property type="match status" value="1"/>
</dbReference>
<dbReference type="SMART" id="SM00200">
    <property type="entry name" value="SEA"/>
    <property type="match status" value="1"/>
</dbReference>
<dbReference type="SUPFAM" id="SSF82671">
    <property type="entry name" value="SEA domain"/>
    <property type="match status" value="1"/>
</dbReference>
<dbReference type="PROSITE" id="PS00022">
    <property type="entry name" value="EGF_1"/>
    <property type="match status" value="1"/>
</dbReference>
<dbReference type="PROSITE" id="PS50026">
    <property type="entry name" value="EGF_3"/>
    <property type="match status" value="1"/>
</dbReference>
<dbReference type="PROSITE" id="PS50024">
    <property type="entry name" value="SEA"/>
    <property type="match status" value="1"/>
</dbReference>
<reference key="1">
    <citation type="journal article" date="2006" name="J. Biol. Chem.">
        <title>Characterization of human mucin MUC17. Complete coding sequence and organization.</title>
        <authorList>
            <person name="Moniaux N."/>
            <person name="Junker W.M."/>
            <person name="Singh A.P."/>
            <person name="Jones A.M."/>
            <person name="Batra S.K."/>
        </authorList>
    </citation>
    <scope>NUCLEOTIDE SEQUENCE [MRNA] (ISOFORMS 1 AND 2)</scope>
    <scope>ALTERNATIVE SPLICING</scope>
    <scope>TISSUE SPECIFICITY</scope>
    <source>
        <tissue>Pancreatic adenocarcinoma</tissue>
    </source>
</reference>
<reference key="2">
    <citation type="journal article" date="2003" name="Nature">
        <title>The DNA sequence of human chromosome 7.</title>
        <authorList>
            <person name="Hillier L.W."/>
            <person name="Fulton R.S."/>
            <person name="Fulton L.A."/>
            <person name="Graves T.A."/>
            <person name="Pepin K.H."/>
            <person name="Wagner-McPherson C."/>
            <person name="Layman D."/>
            <person name="Maas J."/>
            <person name="Jaeger S."/>
            <person name="Walker R."/>
            <person name="Wylie K."/>
            <person name="Sekhon M."/>
            <person name="Becker M.C."/>
            <person name="O'Laughlin M.D."/>
            <person name="Schaller M.E."/>
            <person name="Fewell G.A."/>
            <person name="Delehaunty K.D."/>
            <person name="Miner T.L."/>
            <person name="Nash W.E."/>
            <person name="Cordes M."/>
            <person name="Du H."/>
            <person name="Sun H."/>
            <person name="Edwards J."/>
            <person name="Bradshaw-Cordum H."/>
            <person name="Ali J."/>
            <person name="Andrews S."/>
            <person name="Isak A."/>
            <person name="Vanbrunt A."/>
            <person name="Nguyen C."/>
            <person name="Du F."/>
            <person name="Lamar B."/>
            <person name="Courtney L."/>
            <person name="Kalicki J."/>
            <person name="Ozersky P."/>
            <person name="Bielicki L."/>
            <person name="Scott K."/>
            <person name="Holmes A."/>
            <person name="Harkins R."/>
            <person name="Harris A."/>
            <person name="Strong C.M."/>
            <person name="Hou S."/>
            <person name="Tomlinson C."/>
            <person name="Dauphin-Kohlberg S."/>
            <person name="Kozlowicz-Reilly A."/>
            <person name="Leonard S."/>
            <person name="Rohlfing T."/>
            <person name="Rock S.M."/>
            <person name="Tin-Wollam A.-M."/>
            <person name="Abbott A."/>
            <person name="Minx P."/>
            <person name="Maupin R."/>
            <person name="Strowmatt C."/>
            <person name="Latreille P."/>
            <person name="Miller N."/>
            <person name="Johnson D."/>
            <person name="Murray J."/>
            <person name="Woessner J.P."/>
            <person name="Wendl M.C."/>
            <person name="Yang S.-P."/>
            <person name="Schultz B.R."/>
            <person name="Wallis J.W."/>
            <person name="Spieth J."/>
            <person name="Bieri T.A."/>
            <person name="Nelson J.O."/>
            <person name="Berkowicz N."/>
            <person name="Wohldmann P.E."/>
            <person name="Cook L.L."/>
            <person name="Hickenbotham M.T."/>
            <person name="Eldred J."/>
            <person name="Williams D."/>
            <person name="Bedell J.A."/>
            <person name="Mardis E.R."/>
            <person name="Clifton S.W."/>
            <person name="Chissoe S.L."/>
            <person name="Marra M.A."/>
            <person name="Raymond C."/>
            <person name="Haugen E."/>
            <person name="Gillett W."/>
            <person name="Zhou Y."/>
            <person name="James R."/>
            <person name="Phelps K."/>
            <person name="Iadanoto S."/>
            <person name="Bubb K."/>
            <person name="Simms E."/>
            <person name="Levy R."/>
            <person name="Clendenning J."/>
            <person name="Kaul R."/>
            <person name="Kent W.J."/>
            <person name="Furey T.S."/>
            <person name="Baertsch R.A."/>
            <person name="Brent M.R."/>
            <person name="Keibler E."/>
            <person name="Flicek P."/>
            <person name="Bork P."/>
            <person name="Suyama M."/>
            <person name="Bailey J.A."/>
            <person name="Portnoy M.E."/>
            <person name="Torrents D."/>
            <person name="Chinwalla A.T."/>
            <person name="Gish W.R."/>
            <person name="Eddy S.R."/>
            <person name="McPherson J.D."/>
            <person name="Olson M.V."/>
            <person name="Eichler E.E."/>
            <person name="Green E.D."/>
            <person name="Waterston R.H."/>
            <person name="Wilson R.K."/>
        </authorList>
    </citation>
    <scope>NUCLEOTIDE SEQUENCE [LARGE SCALE GENOMIC DNA]</scope>
</reference>
<reference key="3">
    <citation type="journal article" date="1997" name="Biochem. Biophys. Res. Commun.">
        <title>Molecular cloning of human MUC3 cDNA reveals a novel 59 amino acid tandem repeat region.</title>
        <authorList>
            <person name="Van Klinken B.J.-W."/>
            <person name="Van Dijken T.C."/>
            <person name="Oussoren E."/>
            <person name="Buller H.A."/>
            <person name="Dekker J."/>
            <person name="Einerhand A.W."/>
        </authorList>
    </citation>
    <scope>NUCLEOTIDE SEQUENCE [MRNA] OF 1347-1582</scope>
    <scope>TISSUE SPECIFICITY</scope>
    <scope>VARIANTS PRO-1348; ARG-1375 AND ALA-1480</scope>
    <source>
        <tissue>Small intestine</tissue>
    </source>
</reference>
<reference key="4">
    <citation type="journal article" date="2002" name="Biochem. Biophys. Res. Commun.">
        <title>MUC17, a novel membrane-tethered mucin.</title>
        <authorList>
            <person name="Gum J.R. Jr."/>
            <person name="Crawley S.C."/>
            <person name="Hicks J.W."/>
            <person name="Szymkowski D.E."/>
            <person name="Kim Y.S."/>
        </authorList>
    </citation>
    <scope>NUCLEOTIDE SEQUENCE [MRNA] OF 3465-4493 (ISOFORM 1)</scope>
    <scope>TISSUE SPECIFICITY</scope>
</reference>
<reference key="5">
    <citation type="journal article" date="2003" name="Int. J. Oncol.">
        <title>N-glycosylation is required for the surface localization of MUC17 mucin.</title>
        <authorList>
            <person name="Ho J.J.L."/>
            <person name="Jaituni R.S."/>
            <person name="Crawley S.C."/>
            <person name="Yang S.C."/>
            <person name="Gum J.R."/>
            <person name="Kim Y.S."/>
        </authorList>
    </citation>
    <scope>GLYCOSYLATION</scope>
    <scope>SUBCELLULAR LOCATION</scope>
</reference>
<reference key="6">
    <citation type="journal article" date="2008" name="Biochem. J.">
        <title>The C-terminus of the transmembrane mucin MUC17 binds to the scaffold protein PDZK1 that stably localizes it to the enterocyte apical membrane in the small intestine.</title>
        <authorList>
            <person name="Malmberg E.K."/>
            <person name="Pelaseyed T."/>
            <person name="Petersson A.C."/>
            <person name="Seidler U.E."/>
            <person name="De Jonge H."/>
            <person name="Riordan J.R."/>
            <person name="Hansson G.C."/>
        </authorList>
    </citation>
    <scope>FUNCTION</scope>
    <scope>INTERACTION WITH PDZK1</scope>
</reference>
<name>MUC17_HUMAN</name>
<keyword id="KW-0025">Alternative splicing</keyword>
<keyword id="KW-1003">Cell membrane</keyword>
<keyword id="KW-1015">Disulfide bond</keyword>
<keyword id="KW-0325">Glycoprotein</keyword>
<keyword id="KW-0472">Membrane</keyword>
<keyword id="KW-1267">Proteomics identification</keyword>
<keyword id="KW-1185">Reference proteome</keyword>
<keyword id="KW-0677">Repeat</keyword>
<keyword id="KW-0964">Secreted</keyword>
<keyword id="KW-0732">Signal</keyword>
<keyword id="KW-0812">Transmembrane</keyword>
<keyword id="KW-1133">Transmembrane helix</keyword>
<evidence type="ECO:0000255" key="1"/>
<evidence type="ECO:0000255" key="2">
    <source>
        <dbReference type="PROSITE-ProRule" id="PRU00076"/>
    </source>
</evidence>
<evidence type="ECO:0000255" key="3">
    <source>
        <dbReference type="PROSITE-ProRule" id="PRU00188"/>
    </source>
</evidence>
<evidence type="ECO:0000256" key="4">
    <source>
        <dbReference type="SAM" id="MobiDB-lite"/>
    </source>
</evidence>
<evidence type="ECO:0000269" key="5">
    <source>
    </source>
</evidence>
<evidence type="ECO:0000269" key="6">
    <source>
    </source>
</evidence>
<evidence type="ECO:0000269" key="7">
    <source>
    </source>
</evidence>
<evidence type="ECO:0000269" key="8">
    <source>
    </source>
</evidence>
<evidence type="ECO:0000269" key="9">
    <source>
    </source>
</evidence>
<evidence type="ECO:0000303" key="10">
    <source>
    </source>
</evidence>
<evidence type="ECO:0000305" key="11"/>
<organism>
    <name type="scientific">Homo sapiens</name>
    <name type="common">Human</name>
    <dbReference type="NCBI Taxonomy" id="9606"/>
    <lineage>
        <taxon>Eukaryota</taxon>
        <taxon>Metazoa</taxon>
        <taxon>Chordata</taxon>
        <taxon>Craniata</taxon>
        <taxon>Vertebrata</taxon>
        <taxon>Euteleostomi</taxon>
        <taxon>Mammalia</taxon>
        <taxon>Eutheria</taxon>
        <taxon>Euarchontoglires</taxon>
        <taxon>Primates</taxon>
        <taxon>Haplorrhini</taxon>
        <taxon>Catarrhini</taxon>
        <taxon>Hominidae</taxon>
        <taxon>Homo</taxon>
    </lineage>
</organism>
<accession>Q685J3</accession>
<accession>O14761</accession>
<accession>Q685J2</accession>
<accession>Q8TDH7</accession>
<sequence>MPRPGTMALCLLTLVLSLLPPQAAAEQDLSVNRAVWDGGGCISQGDVLNRQCQQLSQHVRTGSAANTATGTTSTNVVEPRMYLSCSTNPEMTSIESSVTSDTPGVSSTRMTPTESRTTSESTSDSTTLFPSSTEDTSSPTTPEGTDVPMSTPSEESISSTMAFVSTAPLPSFEAYTSLTYKVDMSTPLTTSTQASSSPTTPESTTIPKSTNSEGSTPLTSMPASTMKVASSEAITLLTTPVEISTPVTISAQASSSPTTAEGPSLSNSAPSGGSTPLTRMPLSVMLVVSSEASTLSTTPAATNIPVITSTEASSSPTTAEGTSIPTSTYTEGSTPLTSTPASTMPVATSEMSTLSITPVDTSTLVTTSTEPSSLPTTAEATSMLTSTLSEGSTPLTNMPVSTILVASSEASTTSTIPVDSKTFVTTASEASSSPTTAEDTSIATSTPSEGSTPLTSMPVSTTPVASSEASNLSTTPVDSKTQVTTSTEASSSPPTAEVNSMPTSTPSEGSTPLTSMSVSTMPVASSEASTLSTTPVDTSTPVTTSSEASSSSTTPEGTSIPTSTPSEGSTPLTNMPVSTRLVVSSEASTTSTTPADSNTFVTTSSEASSSSTTAEGTSMPTSTYSERGTTITSMSVSTTLVASSEASTLSTTPVDSNTPVTTSTEATSSSTTAEGTSMPTSTYTEGSTPLTSMPVNTTLVASSEASTLSTTPVDTSTPVTTSTEASSSPTTADGASMPTSTPSEGSTPLTSMPVSKTLLTSSEASTLSTTPLDTSTHITTSTEASCSPTTTEGTSMPISTPSEGSPLLTSIPVSITPVTSPEASTLSTTPVDSNSPVTTSTEVSSSPTPAEGTSMPTSTYSEGRTPLTSMPVSTTLVATSAISTLSTTPVDTSTPVTNSTEARSSPTTSEGTSMPTSTPGEGSTPLTSMPDSTTPVVSSEARTLSATPVDTSTPVTTSTEATSSPTTAEGTSIPTSTPSEGTTPLTSTPVSHTLVANSEASTLSTTPVDSNTPLTTSTEASSPPPTAEGTSMPTSTPSEGSTPLTRMPVSTTMVASSETSTLSTTPADTSTPVTTYSQASSSSTTADGTSMPTSTYSEGSTPLTSVPVSTRLVVSSEASTLSTTPVDTSIPVTTSTEASSSPTTAEGTSIPTSPPSEGTTPLASMPVSTTLVVSSEANTLSTTPVDSKTQVATSTEASSPPPTAEVTSMPTSTPGERSTPLTSMPVRHTPVASSEASTLSTSPVDTSTPVTTSAETSSSPTTAEGTSLPTSTTSEGSTLLTSIPVSTTLVTSPEASTLLTTPVDTKGPVVTSNEVSSSPTPAEGTSMPTSTYSEGRTPLTSIPVNTTLVASSAISILSTTPVDNSTPVTTSTEACSSPTTSEGTSMPNSNPSEGTTPLTSIPVSTTPVVSSEASTLSATPVDTSTPGTTSAEATSSPTTAEGISIPTSTPSEGKTPLKSIPVSNTPVANSEASTLSTTPVDSNSPVVTSTAVSSSPTPAEGTSIAISTPSEGSTALTSIPVSTTTVASSEINSLSTTPAVTSTPVTTYSQASSSPTTADGTSMQTSTYSEGSTPLTSLPVSTMLVVSSEANTLSTTPIDSKTQVTASTEASSSTTAEGSSMTISTPSEGSPLLTSIPVSTTPVASPEASTLSTTPVDSNSPVITSTEVSSSPTPAEGTSMPTSTYTEGRTPLTSITVRTTPVASSAISTLSTTPVDNSTPVTTSTEARSSPTTSEGTSMPNSTPSEGTTPLTSIPVSTTPVLSSEASTLSATPIDTSTPVTTSTEATSSPTTAEGTSIPTSTLSEGMTPLTSTPVSHTLVANSEASTLSTTPVDSNSPVVTSTAVSSSPTPAEGTSIATSTPSEGSTALTSIPVSTTTVASSETNTLSTTPAVTSTPVTTYAQVSSSPTTADGSSMPTSTPREGRPPLTSIPVSTTTVASSEINTLSTTLADTRTPVTTYSQASSSPTTADGTSMPTPAYSEGSTPLTSMPLSTTLVVSSEASTLSTTPVDTSTPATTSTEGSSSPTTAGGTSIQTSTPSERTTPLAGMPVSTTLVVSSEGNTLSTTPVDSKTQVTNSTEASSSATAEGSSMTISAPSEGSPLLTSIPLSTTPVASPEASTLSTTPVDSNSPVITSTEVSSSPIPTEGTSMQTSTYSDRRTPLTSMPVSTTVVASSAISTLSTTPVDTSTPVTNSTEARSSPTTSEGTSMPTSTPSEGSTPFTSMPVSTMPVVTSEASTLSATPVDTSTPVTTSTEATSSPTTAEGTSIPTSTLSEGTTPLTSIPVSHTLVANSEVSTLSTTPVDSNTPFTTSTEASSPPPTAEGTSMPTSTSSEGNTPLTRMPVSTTMVASFETSTLSTTPADTSTPVTTYSQAGSSPTTADDTSMPTSTYSEGSTPLTSVPVSTMPVVSSEASTHSTTPVDTSTPVTTSTEASSSPTTAEGTSIPTSPPSEGTTPLASMPVSTTPVVSSEAGTLSTTPVDTSTPMTTSTEASSSPTTAEDIVVPISTASEGSTLLTSIPVSTTPVASPEASTLSTTPVDSNSPVVTSTEISSSATSAEGTSMPTSTYSEGSTPLRSMPVSTKPLASSEASTLSTTPVDTSIPVTTSTETSSSPTTAKDTSMPISTPSEVSTSLTSILVSTMPVASSEASTLSTTPVDTRTLVTTSTGTSSSPTTAEGSSMPTSTPGERSTPLTNILVSTTLLANSEASTLSTTPVDTSTPVTTSAEASSSPTTAEGTSMRISTPSDGSTPLTSILVSTLPVASSEASTVSTTAVDTSIPVTTSTEASSSPTTAEVTSMPTSTPSETSTPLTSMPVNHTPVASSEAGTLSTTPVDTSTPVTTSTKASSSPTTAEGIVVPISTASEGSTLLTSIPVSTTPVASSEASTLSTTPVDTSIPVTTSTEGSSSPTTAEGTSMPISTPSEVSTPLTSILVSTVPVAGSEASTLSTTPVDTRTPVTTSAEASSSPTTAEGTSMPISTPGERRTPLTSMSVSTMPVASSEASTLSRTPADTSTPVTTSTEASSSPTTAEGTGIPISTPSEGSTPLTSIPVSTTPVAIPEASTLSTTPVDSNSPVVTSTEVSSSPTPAEGTSMPISTYSEGSTPLTGVPVSTTPVTSSAISTLSTTPVDTSTPVTTSTEAHSSPTTSEGTSMPTSTPSEGSTPLTYMPVSTMLVVSSEDSTLSATPVDTSTPVTTSTEATSSTTAEGTSIPTSTPSEGMTPLTSVPVSNTPVASSEASILSTTPVDSNTPLTTSTEASSSPPTAEGTSMPTSTPSEGSTPLTSMPVSTTTVASSETSTLSTTPADTSTPVTTYSQASSSPPIADGTSMPTSTYSEGSTPLTNMSFSTTPVVSSEASTLSTTPVDTSTPVTTSTEASLSPTTAEGTSIPTSSPSEGTTPLASMPVSTTPVVSSEVNTLSTTPVDSNTLVTTSTEASSSPTIAEGTSLPTSTTSEGSTPLSIMPLSTTPVASSEASTLSTTPVDTSTPVTTSSPTNSSPTTAEVTSMPTSTAGEGSTPLTNMPVSTTPVASSEASTLSTTPVDSNTFVTSSSQASSSPATLQVTTMRMSTPSEGSSSLTTMLLSSTYVTSSEASTPSTPSVDRSTPVTTSTQSNSTPTPPEVITLPMSTPSEVSTPLTIMPVSTTSVTISEAGTASTLPVDTSTPVITSTQVSSSPVTPEGTTMPIWTPSEGSTPLTTMPVSTTRVTSSEGSTLSTPSVVTSTPVTTSTEAISSSATLDSTTMSVSMPMEISTLGTTILVSTTPVTRFPESSTPSIPSVYTSMSMTTASEGSSSPTTLEGTTTMPMSTTSERSTLLTTVLISPISVMSPSEASTLSTPPGDTSTPLLTSTKAGSFSIPAEVTTIRISITSERSTPLTTLLVSTTLPTSFPGASIASTPPLDTSTTFTPSTDTASTPTIPVATTISVSVITEGSTPGTTIFIPSTPVTSSTADVFPATTGAVSTPVITSTELNTPSTSSSSTTTSFSTTKEFTTPAMTTAAPLTYVTMSTAPSTPRTTSRGCTTSASTLSATSTPHTSTSVTTRPVTPSSESSRPSTITSHTIPPTFPPAHSSTPPTTSASSTTVNPEAVTTMTTRTKPSTRTTSFPTVTTTAVPTNTTIKSNPTSTPTVPRTTTCFGDGCQNTASRCKNGGTWDGLKCQCPNLYYGELCEEVVSSIDIGPPETISAQMELTVTVTSVKFTEELKNHSSQEFQEFKQTFTEQMNIVYSGIPEYVGVNITKLRLGSVVVEHDVLLRTKYTPEYKTVLDNATEVVKEKITKVTTQQIMINDICSDMMCFNTTGTQVQNITVTQYDPEEDCRKMAKEYGDYFVVEYRDQKPYCISPCEPGFSVSKNCNLGKCQMSLSGPQCLCVTTETHWYSGETCNQGTQKSLVYGLVGAGVVLMLIILVALLMLVFRSKREVKRQKYRLSQLYKWQEEDSGPAPGTFQNIGFDICQDDDSIHLESIYSNFQPSLRHIDPETKIRIQRPQVMTTSF</sequence>
<comment type="function">
    <text evidence="8">Probably plays a role in maintaining homeostasis on mucosal surfaces.</text>
</comment>
<comment type="subunit">
    <text evidence="8">Interacts via its C-terminus with PDZK1 and this interaction appears important for proper localization.</text>
</comment>
<comment type="subcellular location">
    <molecule>Isoform 1</molecule>
    <subcellularLocation>
        <location>Cell membrane</location>
        <topology>Single-pass membrane protein</topology>
    </subcellularLocation>
</comment>
<comment type="subcellular location">
    <molecule>Isoform 2</molecule>
    <subcellularLocation>
        <location evidence="11">Secreted</location>
    </subcellularLocation>
    <subcellularLocation>
        <location>Cell membrane</location>
    </subcellularLocation>
</comment>
<comment type="alternative products">
    <event type="alternative splicing"/>
    <isoform>
        <id>Q685J3-1</id>
        <name>1</name>
        <name>Major</name>
        <name>Mb-MUC17</name>
        <sequence type="displayed"/>
    </isoform>
    <isoform>
        <id>Q685J3-2</id>
        <name>2</name>
        <name>Minor</name>
        <name>s-MUC17</name>
        <sequence type="described" ref="VSP_032648 VSP_032649"/>
    </isoform>
</comment>
<comment type="tissue specificity">
    <text evidence="5 7 9">Expressed almost exclusively in the intestine. Expression is especially high in both the duodenum and transverse colon. Expressed in mature absorptive cells of the small intestinal villi. No expression is detected in goblet cells. Highly expressed in pancreatic adenocarcinoma tissue (at protein level). Expression is not detectable in normal pancreas, in pancreatitis or in cell lines derived from other cancers.</text>
</comment>
<comment type="PTM">
    <text>Probably cleaved within the SEA domain.</text>
</comment>
<comment type="PTM">
    <text evidence="6">N-glycosylated. Contains high mannose and complex-type glycans. The forms containing the complex type glycans localize to the cell surface. Not O-glycosylated.</text>
</comment>
<comment type="online information" name="Atlas of Genetics and Cytogenetics in Oncology and Haematology">
    <link uri="https://atlasgeneticsoncology.org/gene/41456/MUC17"/>
</comment>
<comment type="online information" name="Mucin database">
    <link uri="http://www.medkem.gu.se/mucinbiology/databases/"/>
</comment>